<dbReference type="EC" id="2.5.1.78" evidence="1"/>
<dbReference type="EMBL" id="BX908798">
    <property type="protein sequence ID" value="CAF23613.1"/>
    <property type="molecule type" value="Genomic_DNA"/>
</dbReference>
<dbReference type="RefSeq" id="WP_011175439.1">
    <property type="nucleotide sequence ID" value="NC_005861.2"/>
</dbReference>
<dbReference type="SMR" id="Q6MCT6"/>
<dbReference type="STRING" id="264201.pc0889"/>
<dbReference type="KEGG" id="pcu:PC_RS04290"/>
<dbReference type="eggNOG" id="COG0054">
    <property type="taxonomic scope" value="Bacteria"/>
</dbReference>
<dbReference type="HOGENOM" id="CLU_089358_1_1_0"/>
<dbReference type="OrthoDB" id="9809709at2"/>
<dbReference type="UniPathway" id="UPA00275">
    <property type="reaction ID" value="UER00404"/>
</dbReference>
<dbReference type="Proteomes" id="UP000000529">
    <property type="component" value="Chromosome"/>
</dbReference>
<dbReference type="GO" id="GO:0005829">
    <property type="term" value="C:cytosol"/>
    <property type="evidence" value="ECO:0007669"/>
    <property type="project" value="TreeGrafter"/>
</dbReference>
<dbReference type="GO" id="GO:0009349">
    <property type="term" value="C:riboflavin synthase complex"/>
    <property type="evidence" value="ECO:0007669"/>
    <property type="project" value="InterPro"/>
</dbReference>
<dbReference type="GO" id="GO:0000906">
    <property type="term" value="F:6,7-dimethyl-8-ribityllumazine synthase activity"/>
    <property type="evidence" value="ECO:0007669"/>
    <property type="project" value="UniProtKB-UniRule"/>
</dbReference>
<dbReference type="GO" id="GO:0009231">
    <property type="term" value="P:riboflavin biosynthetic process"/>
    <property type="evidence" value="ECO:0007669"/>
    <property type="project" value="UniProtKB-UniRule"/>
</dbReference>
<dbReference type="CDD" id="cd09209">
    <property type="entry name" value="Lumazine_synthase-I"/>
    <property type="match status" value="1"/>
</dbReference>
<dbReference type="FunFam" id="3.40.50.960:FF:000001">
    <property type="entry name" value="6,7-dimethyl-8-ribityllumazine synthase"/>
    <property type="match status" value="1"/>
</dbReference>
<dbReference type="Gene3D" id="3.40.50.960">
    <property type="entry name" value="Lumazine/riboflavin synthase"/>
    <property type="match status" value="1"/>
</dbReference>
<dbReference type="HAMAP" id="MF_00178">
    <property type="entry name" value="Lumazine_synth"/>
    <property type="match status" value="1"/>
</dbReference>
<dbReference type="InterPro" id="IPR034964">
    <property type="entry name" value="LS"/>
</dbReference>
<dbReference type="InterPro" id="IPR002180">
    <property type="entry name" value="LS/RS"/>
</dbReference>
<dbReference type="InterPro" id="IPR036467">
    <property type="entry name" value="LS/RS_sf"/>
</dbReference>
<dbReference type="NCBIfam" id="TIGR00114">
    <property type="entry name" value="lumazine-synth"/>
    <property type="match status" value="1"/>
</dbReference>
<dbReference type="NCBIfam" id="NF000812">
    <property type="entry name" value="PRK00061.1-4"/>
    <property type="match status" value="1"/>
</dbReference>
<dbReference type="PANTHER" id="PTHR21058:SF0">
    <property type="entry name" value="6,7-DIMETHYL-8-RIBITYLLUMAZINE SYNTHASE"/>
    <property type="match status" value="1"/>
</dbReference>
<dbReference type="PANTHER" id="PTHR21058">
    <property type="entry name" value="6,7-DIMETHYL-8-RIBITYLLUMAZINE SYNTHASE DMRL SYNTHASE LUMAZINE SYNTHASE"/>
    <property type="match status" value="1"/>
</dbReference>
<dbReference type="Pfam" id="PF00885">
    <property type="entry name" value="DMRL_synthase"/>
    <property type="match status" value="1"/>
</dbReference>
<dbReference type="SUPFAM" id="SSF52121">
    <property type="entry name" value="Lumazine synthase"/>
    <property type="match status" value="1"/>
</dbReference>
<organism>
    <name type="scientific">Protochlamydia amoebophila (strain UWE25)</name>
    <dbReference type="NCBI Taxonomy" id="264201"/>
    <lineage>
        <taxon>Bacteria</taxon>
        <taxon>Pseudomonadati</taxon>
        <taxon>Chlamydiota</taxon>
        <taxon>Chlamydiia</taxon>
        <taxon>Parachlamydiales</taxon>
        <taxon>Parachlamydiaceae</taxon>
        <taxon>Candidatus Protochlamydia</taxon>
    </lineage>
</organism>
<comment type="function">
    <text evidence="1">Catalyzes the formation of 6,7-dimethyl-8-ribityllumazine by condensation of 5-amino-6-(D-ribitylamino)uracil with 3,4-dihydroxy-2-butanone 4-phosphate. This is the penultimate step in the biosynthesis of riboflavin.</text>
</comment>
<comment type="catalytic activity">
    <reaction evidence="1">
        <text>(2S)-2-hydroxy-3-oxobutyl phosphate + 5-amino-6-(D-ribitylamino)uracil = 6,7-dimethyl-8-(1-D-ribityl)lumazine + phosphate + 2 H2O + H(+)</text>
        <dbReference type="Rhea" id="RHEA:26152"/>
        <dbReference type="ChEBI" id="CHEBI:15377"/>
        <dbReference type="ChEBI" id="CHEBI:15378"/>
        <dbReference type="ChEBI" id="CHEBI:15934"/>
        <dbReference type="ChEBI" id="CHEBI:43474"/>
        <dbReference type="ChEBI" id="CHEBI:58201"/>
        <dbReference type="ChEBI" id="CHEBI:58830"/>
        <dbReference type="EC" id="2.5.1.78"/>
    </reaction>
</comment>
<comment type="pathway">
    <text evidence="1">Cofactor biosynthesis; riboflavin biosynthesis; riboflavin from 2-hydroxy-3-oxobutyl phosphate and 5-amino-6-(D-ribitylamino)uracil: step 1/2.</text>
</comment>
<comment type="similarity">
    <text evidence="1">Belongs to the DMRL synthase family.</text>
</comment>
<protein>
    <recommendedName>
        <fullName evidence="1">6,7-dimethyl-8-ribityllumazine synthase</fullName>
        <shortName evidence="1">DMRL synthase</shortName>
        <shortName evidence="1">LS</shortName>
        <shortName evidence="1">Lumazine synthase</shortName>
        <ecNumber evidence="1">2.5.1.78</ecNumber>
    </recommendedName>
</protein>
<gene>
    <name evidence="1" type="primary">ribH</name>
    <name type="ordered locus">pc0889</name>
</gene>
<sequence length="172" mass="18703">MKEYKGKLNISKARIGIVISRFNETITKNLLEGSLDELERYGISTQNLPVAWVPGAFEIPLIAKQMALSGEFDAIICLGAIIRGTTPHFDYVASQSAAGILNVSLEINLPVVFGILTTDTVEQAMERSGVKMGNKGREAVQTAIEMIDLTDQLSLLRNHPHSSTANNTSVCK</sequence>
<reference key="1">
    <citation type="journal article" date="2004" name="Science">
        <title>Illuminating the evolutionary history of chlamydiae.</title>
        <authorList>
            <person name="Horn M."/>
            <person name="Collingro A."/>
            <person name="Schmitz-Esser S."/>
            <person name="Beier C.L."/>
            <person name="Purkhold U."/>
            <person name="Fartmann B."/>
            <person name="Brandt P."/>
            <person name="Nyakatura G.J."/>
            <person name="Droege M."/>
            <person name="Frishman D."/>
            <person name="Rattei T."/>
            <person name="Mewes H.-W."/>
            <person name="Wagner M."/>
        </authorList>
    </citation>
    <scope>NUCLEOTIDE SEQUENCE [LARGE SCALE GENOMIC DNA]</scope>
    <source>
        <strain>UWE25</strain>
    </source>
</reference>
<name>RISB_PARUW</name>
<accession>Q6MCT6</accession>
<keyword id="KW-1185">Reference proteome</keyword>
<keyword id="KW-0686">Riboflavin biosynthesis</keyword>
<keyword id="KW-0808">Transferase</keyword>
<feature type="chain" id="PRO_1000040470" description="6,7-dimethyl-8-ribityllumazine synthase">
    <location>
        <begin position="1"/>
        <end position="172"/>
    </location>
</feature>
<feature type="active site" description="Proton donor" evidence="1">
    <location>
        <position position="88"/>
    </location>
</feature>
<feature type="binding site" evidence="1">
    <location>
        <position position="22"/>
    </location>
    <ligand>
        <name>5-amino-6-(D-ribitylamino)uracil</name>
        <dbReference type="ChEBI" id="CHEBI:15934"/>
    </ligand>
</feature>
<feature type="binding site" evidence="1">
    <location>
        <begin position="56"/>
        <end position="58"/>
    </location>
    <ligand>
        <name>5-amino-6-(D-ribitylamino)uracil</name>
        <dbReference type="ChEBI" id="CHEBI:15934"/>
    </ligand>
</feature>
<feature type="binding site" evidence="1">
    <location>
        <begin position="78"/>
        <end position="79"/>
    </location>
    <ligand>
        <name>(2S)-2-hydroxy-3-oxobutyl phosphate</name>
        <dbReference type="ChEBI" id="CHEBI:58830"/>
    </ligand>
</feature>
<feature type="binding site" evidence="1">
    <location>
        <begin position="80"/>
        <end position="82"/>
    </location>
    <ligand>
        <name>5-amino-6-(D-ribitylamino)uracil</name>
        <dbReference type="ChEBI" id="CHEBI:15934"/>
    </ligand>
</feature>
<feature type="binding site" evidence="1">
    <location>
        <position position="113"/>
    </location>
    <ligand>
        <name>5-amino-6-(D-ribitylamino)uracil</name>
        <dbReference type="ChEBI" id="CHEBI:15934"/>
    </ligand>
</feature>
<feature type="binding site" evidence="1">
    <location>
        <position position="127"/>
    </location>
    <ligand>
        <name>(2S)-2-hydroxy-3-oxobutyl phosphate</name>
        <dbReference type="ChEBI" id="CHEBI:58830"/>
    </ligand>
</feature>
<proteinExistence type="inferred from homology"/>
<evidence type="ECO:0000255" key="1">
    <source>
        <dbReference type="HAMAP-Rule" id="MF_00178"/>
    </source>
</evidence>